<gene>
    <name evidence="1" type="primary">plsY</name>
    <name type="ordered locus">syc2036_c</name>
</gene>
<feature type="chain" id="PRO_0000188475" description="Glycerol-3-phosphate acyltransferase">
    <location>
        <begin position="1"/>
        <end position="210"/>
    </location>
</feature>
<feature type="transmembrane region" description="Helical" evidence="1">
    <location>
        <begin position="1"/>
        <end position="21"/>
    </location>
</feature>
<feature type="transmembrane region" description="Helical" evidence="1">
    <location>
        <begin position="53"/>
        <end position="73"/>
    </location>
</feature>
<feature type="transmembrane region" description="Helical" evidence="1">
    <location>
        <begin position="87"/>
        <end position="107"/>
    </location>
</feature>
<feature type="transmembrane region" description="Helical" evidence="1">
    <location>
        <begin position="122"/>
        <end position="142"/>
    </location>
</feature>
<feature type="transmembrane region" description="Helical" evidence="1">
    <location>
        <begin position="147"/>
        <end position="167"/>
    </location>
</feature>
<accession>Q5N0E4</accession>
<evidence type="ECO:0000255" key="1">
    <source>
        <dbReference type="HAMAP-Rule" id="MF_01043"/>
    </source>
</evidence>
<dbReference type="EC" id="2.3.1.275" evidence="1"/>
<dbReference type="EMBL" id="AP008231">
    <property type="protein sequence ID" value="BAD80226.1"/>
    <property type="molecule type" value="Genomic_DNA"/>
</dbReference>
<dbReference type="RefSeq" id="WP_011244346.1">
    <property type="nucleotide sequence ID" value="NZ_CP085785.1"/>
</dbReference>
<dbReference type="SMR" id="Q5N0E4"/>
<dbReference type="GeneID" id="72430933"/>
<dbReference type="KEGG" id="syc:syc2036_c"/>
<dbReference type="eggNOG" id="COG0344">
    <property type="taxonomic scope" value="Bacteria"/>
</dbReference>
<dbReference type="UniPathway" id="UPA00085"/>
<dbReference type="Proteomes" id="UP000001175">
    <property type="component" value="Chromosome"/>
</dbReference>
<dbReference type="GO" id="GO:0005886">
    <property type="term" value="C:plasma membrane"/>
    <property type="evidence" value="ECO:0007669"/>
    <property type="project" value="UniProtKB-SubCell"/>
</dbReference>
<dbReference type="GO" id="GO:0043772">
    <property type="term" value="F:acyl-phosphate glycerol-3-phosphate acyltransferase activity"/>
    <property type="evidence" value="ECO:0007669"/>
    <property type="project" value="UniProtKB-UniRule"/>
</dbReference>
<dbReference type="GO" id="GO:0008654">
    <property type="term" value="P:phospholipid biosynthetic process"/>
    <property type="evidence" value="ECO:0007669"/>
    <property type="project" value="UniProtKB-UniRule"/>
</dbReference>
<dbReference type="HAMAP" id="MF_01043">
    <property type="entry name" value="PlsY"/>
    <property type="match status" value="1"/>
</dbReference>
<dbReference type="InterPro" id="IPR003811">
    <property type="entry name" value="G3P_acylTferase_PlsY"/>
</dbReference>
<dbReference type="NCBIfam" id="TIGR00023">
    <property type="entry name" value="glycerol-3-phosphate 1-O-acyltransferase PlsY"/>
    <property type="match status" value="1"/>
</dbReference>
<dbReference type="PANTHER" id="PTHR30309:SF0">
    <property type="entry name" value="GLYCEROL-3-PHOSPHATE ACYLTRANSFERASE-RELATED"/>
    <property type="match status" value="1"/>
</dbReference>
<dbReference type="PANTHER" id="PTHR30309">
    <property type="entry name" value="INNER MEMBRANE PROTEIN YGIH"/>
    <property type="match status" value="1"/>
</dbReference>
<dbReference type="Pfam" id="PF02660">
    <property type="entry name" value="G3P_acyltransf"/>
    <property type="match status" value="1"/>
</dbReference>
<dbReference type="SMART" id="SM01207">
    <property type="entry name" value="G3P_acyltransf"/>
    <property type="match status" value="1"/>
</dbReference>
<organism>
    <name type="scientific">Synechococcus sp. (strain ATCC 27144 / PCC 6301 / SAUG 1402/1)</name>
    <name type="common">Anacystis nidulans</name>
    <dbReference type="NCBI Taxonomy" id="269084"/>
    <lineage>
        <taxon>Bacteria</taxon>
        <taxon>Bacillati</taxon>
        <taxon>Cyanobacteriota</taxon>
        <taxon>Cyanophyceae</taxon>
        <taxon>Synechococcales</taxon>
        <taxon>Synechococcaceae</taxon>
        <taxon>Synechococcus</taxon>
    </lineage>
</organism>
<comment type="function">
    <text evidence="1">Catalyzes the transfer of an acyl group from acyl-phosphate (acyl-PO(4)) to glycerol-3-phosphate (G3P) to form lysophosphatidic acid (LPA). This enzyme utilizes acyl-phosphate as fatty acyl donor, but not acyl-CoA or acyl-ACP.</text>
</comment>
<comment type="catalytic activity">
    <reaction evidence="1">
        <text>an acyl phosphate + sn-glycerol 3-phosphate = a 1-acyl-sn-glycero-3-phosphate + phosphate</text>
        <dbReference type="Rhea" id="RHEA:34075"/>
        <dbReference type="ChEBI" id="CHEBI:43474"/>
        <dbReference type="ChEBI" id="CHEBI:57597"/>
        <dbReference type="ChEBI" id="CHEBI:57970"/>
        <dbReference type="ChEBI" id="CHEBI:59918"/>
        <dbReference type="EC" id="2.3.1.275"/>
    </reaction>
</comment>
<comment type="pathway">
    <text evidence="1">Lipid metabolism; phospholipid metabolism.</text>
</comment>
<comment type="subunit">
    <text evidence="1">Probably interacts with PlsX.</text>
</comment>
<comment type="subcellular location">
    <subcellularLocation>
        <location evidence="1">Cell inner membrane</location>
        <topology evidence="1">Multi-pass membrane protein</topology>
    </subcellularLocation>
</comment>
<comment type="similarity">
    <text evidence="1">Belongs to the PlsY family.</text>
</comment>
<proteinExistence type="inferred from homology"/>
<keyword id="KW-0997">Cell inner membrane</keyword>
<keyword id="KW-1003">Cell membrane</keyword>
<keyword id="KW-0444">Lipid biosynthesis</keyword>
<keyword id="KW-0443">Lipid metabolism</keyword>
<keyword id="KW-0472">Membrane</keyword>
<keyword id="KW-0594">Phospholipid biosynthesis</keyword>
<keyword id="KW-1208">Phospholipid metabolism</keyword>
<keyword id="KW-0808">Transferase</keyword>
<keyword id="KW-0812">Transmembrane</keyword>
<keyword id="KW-1133">Transmembrane helix</keyword>
<sequence length="210" mass="21913">MLLSVVAIALLAYLLGSFPAGYLAGRWLKGIDIRKEGSGSTGATNVLRVLGKGPALVVFITDILKGVLAVVAARAIASTNGLDPSAIAWLAAFAAIIAVVGHSLPVWLSFRGGKSVATSLGVLLALSPVVGLSGFGAFLLLLALFRIVSLGSIAGAITVIVLMLILPEPLPNKILGIASGIYVIYRHRSNLDRLRRGEEPRIGQRLSTNR</sequence>
<reference key="1">
    <citation type="journal article" date="2007" name="Photosyn. Res.">
        <title>Complete nucleotide sequence of the freshwater unicellular cyanobacterium Synechococcus elongatus PCC 6301 chromosome: gene content and organization.</title>
        <authorList>
            <person name="Sugita C."/>
            <person name="Ogata K."/>
            <person name="Shikata M."/>
            <person name="Jikuya H."/>
            <person name="Takano J."/>
            <person name="Furumichi M."/>
            <person name="Kanehisa M."/>
            <person name="Omata T."/>
            <person name="Sugiura M."/>
            <person name="Sugita M."/>
        </authorList>
    </citation>
    <scope>NUCLEOTIDE SEQUENCE [LARGE SCALE GENOMIC DNA]</scope>
    <source>
        <strain>ATCC 27144 / PCC 6301 / SAUG 1402/1</strain>
    </source>
</reference>
<protein>
    <recommendedName>
        <fullName evidence="1">Glycerol-3-phosphate acyltransferase</fullName>
    </recommendedName>
    <alternativeName>
        <fullName evidence="1">Acyl-PO4 G3P acyltransferase</fullName>
    </alternativeName>
    <alternativeName>
        <fullName evidence="1">Acyl-phosphate--glycerol-3-phosphate acyltransferase</fullName>
    </alternativeName>
    <alternativeName>
        <fullName evidence="1">G3P acyltransferase</fullName>
        <shortName evidence="1">GPAT</shortName>
        <ecNumber evidence="1">2.3.1.275</ecNumber>
    </alternativeName>
    <alternativeName>
        <fullName evidence="1">Lysophosphatidic acid synthase</fullName>
        <shortName evidence="1">LPA synthase</shortName>
    </alternativeName>
</protein>
<name>PLSY_SYNP6</name>